<proteinExistence type="inferred from homology"/>
<dbReference type="EC" id="2.1.3.3"/>
<dbReference type="EMBL" id="CP000046">
    <property type="protein sequence ID" value="AAW36560.1"/>
    <property type="molecule type" value="Genomic_DNA"/>
</dbReference>
<dbReference type="RefSeq" id="WP_000793605.1">
    <property type="nucleotide sequence ID" value="NZ_JBGOFO010000002.1"/>
</dbReference>
<dbReference type="SMR" id="Q5HGR3"/>
<dbReference type="KEGG" id="sac:SACOL1181"/>
<dbReference type="HOGENOM" id="CLU_043846_3_1_9"/>
<dbReference type="UniPathway" id="UPA00068">
    <property type="reaction ID" value="UER00112"/>
</dbReference>
<dbReference type="Proteomes" id="UP000000530">
    <property type="component" value="Chromosome"/>
</dbReference>
<dbReference type="GO" id="GO:0005737">
    <property type="term" value="C:cytoplasm"/>
    <property type="evidence" value="ECO:0007669"/>
    <property type="project" value="UniProtKB-SubCell"/>
</dbReference>
<dbReference type="GO" id="GO:0016597">
    <property type="term" value="F:amino acid binding"/>
    <property type="evidence" value="ECO:0007669"/>
    <property type="project" value="InterPro"/>
</dbReference>
<dbReference type="GO" id="GO:0004585">
    <property type="term" value="F:ornithine carbamoyltransferase activity"/>
    <property type="evidence" value="ECO:0007669"/>
    <property type="project" value="UniProtKB-UniRule"/>
</dbReference>
<dbReference type="GO" id="GO:0042450">
    <property type="term" value="P:arginine biosynthetic process via ornithine"/>
    <property type="evidence" value="ECO:0007669"/>
    <property type="project" value="TreeGrafter"/>
</dbReference>
<dbReference type="GO" id="GO:0019240">
    <property type="term" value="P:citrulline biosynthetic process"/>
    <property type="evidence" value="ECO:0007669"/>
    <property type="project" value="TreeGrafter"/>
</dbReference>
<dbReference type="GO" id="GO:0006526">
    <property type="term" value="P:L-arginine biosynthetic process"/>
    <property type="evidence" value="ECO:0007669"/>
    <property type="project" value="UniProtKB-UniRule"/>
</dbReference>
<dbReference type="FunFam" id="3.40.50.1370:FF:000004">
    <property type="entry name" value="Ornithine carbamoyltransferase"/>
    <property type="match status" value="1"/>
</dbReference>
<dbReference type="Gene3D" id="3.40.50.1370">
    <property type="entry name" value="Aspartate/ornithine carbamoyltransferase"/>
    <property type="match status" value="2"/>
</dbReference>
<dbReference type="HAMAP" id="MF_01109">
    <property type="entry name" value="OTCase"/>
    <property type="match status" value="1"/>
</dbReference>
<dbReference type="InterPro" id="IPR006132">
    <property type="entry name" value="Asp/Orn_carbamoyltranf_P-bd"/>
</dbReference>
<dbReference type="InterPro" id="IPR006130">
    <property type="entry name" value="Asp/Orn_carbamoylTrfase"/>
</dbReference>
<dbReference type="InterPro" id="IPR036901">
    <property type="entry name" value="Asp/Orn_carbamoylTrfase_sf"/>
</dbReference>
<dbReference type="InterPro" id="IPR006131">
    <property type="entry name" value="Asp_carbamoyltransf_Asp/Orn-bd"/>
</dbReference>
<dbReference type="InterPro" id="IPR002292">
    <property type="entry name" value="Orn/put_carbamltrans"/>
</dbReference>
<dbReference type="InterPro" id="IPR024904">
    <property type="entry name" value="OTCase_ArgI"/>
</dbReference>
<dbReference type="NCBIfam" id="TIGR00658">
    <property type="entry name" value="orni_carb_tr"/>
    <property type="match status" value="1"/>
</dbReference>
<dbReference type="NCBIfam" id="NF001986">
    <property type="entry name" value="PRK00779.1"/>
    <property type="match status" value="1"/>
</dbReference>
<dbReference type="NCBIfam" id="NF003286">
    <property type="entry name" value="PRK04284.1"/>
    <property type="match status" value="1"/>
</dbReference>
<dbReference type="PANTHER" id="PTHR45753:SF2">
    <property type="entry name" value="ORNITHINE CARBAMOYLTRANSFERASE"/>
    <property type="match status" value="1"/>
</dbReference>
<dbReference type="PANTHER" id="PTHR45753">
    <property type="entry name" value="ORNITHINE CARBAMOYLTRANSFERASE, MITOCHONDRIAL"/>
    <property type="match status" value="1"/>
</dbReference>
<dbReference type="Pfam" id="PF00185">
    <property type="entry name" value="OTCace"/>
    <property type="match status" value="1"/>
</dbReference>
<dbReference type="Pfam" id="PF02729">
    <property type="entry name" value="OTCace_N"/>
    <property type="match status" value="1"/>
</dbReference>
<dbReference type="PRINTS" id="PR00100">
    <property type="entry name" value="AOTCASE"/>
</dbReference>
<dbReference type="PRINTS" id="PR00102">
    <property type="entry name" value="OTCASE"/>
</dbReference>
<dbReference type="SUPFAM" id="SSF53671">
    <property type="entry name" value="Aspartate/ornithine carbamoyltransferase"/>
    <property type="match status" value="1"/>
</dbReference>
<dbReference type="PROSITE" id="PS00097">
    <property type="entry name" value="CARBAMOYLTRANSFERASE"/>
    <property type="match status" value="1"/>
</dbReference>
<comment type="function">
    <text evidence="1">Reversibly catalyzes the transfer of the carbamoyl group from carbamoyl phosphate (CP) to the N(epsilon) atom of ornithine (ORN) to produce L-citrulline.</text>
</comment>
<comment type="catalytic activity">
    <reaction>
        <text>carbamoyl phosphate + L-ornithine = L-citrulline + phosphate + H(+)</text>
        <dbReference type="Rhea" id="RHEA:19513"/>
        <dbReference type="ChEBI" id="CHEBI:15378"/>
        <dbReference type="ChEBI" id="CHEBI:43474"/>
        <dbReference type="ChEBI" id="CHEBI:46911"/>
        <dbReference type="ChEBI" id="CHEBI:57743"/>
        <dbReference type="ChEBI" id="CHEBI:58228"/>
        <dbReference type="EC" id="2.1.3.3"/>
    </reaction>
</comment>
<comment type="pathway">
    <text>Amino-acid biosynthesis; L-arginine biosynthesis; L-arginine from L-ornithine and carbamoyl phosphate: step 1/3.</text>
</comment>
<comment type="subcellular location">
    <subcellularLocation>
        <location evidence="1">Cytoplasm</location>
    </subcellularLocation>
</comment>
<comment type="similarity">
    <text evidence="3">Belongs to the aspartate/ornithine carbamoyltransferase superfamily. OTCase family.</text>
</comment>
<evidence type="ECO:0000250" key="1"/>
<evidence type="ECO:0000255" key="2">
    <source>
        <dbReference type="HAMAP-Rule" id="MF_01109"/>
    </source>
</evidence>
<evidence type="ECO:0000305" key="3"/>
<reference key="1">
    <citation type="journal article" date="2005" name="J. Bacteriol.">
        <title>Insights on evolution of virulence and resistance from the complete genome analysis of an early methicillin-resistant Staphylococcus aureus strain and a biofilm-producing methicillin-resistant Staphylococcus epidermidis strain.</title>
        <authorList>
            <person name="Gill S.R."/>
            <person name="Fouts D.E."/>
            <person name="Archer G.L."/>
            <person name="Mongodin E.F."/>
            <person name="DeBoy R.T."/>
            <person name="Ravel J."/>
            <person name="Paulsen I.T."/>
            <person name="Kolonay J.F."/>
            <person name="Brinkac L.M."/>
            <person name="Beanan M.J."/>
            <person name="Dodson R.J."/>
            <person name="Daugherty S.C."/>
            <person name="Madupu R."/>
            <person name="Angiuoli S.V."/>
            <person name="Durkin A.S."/>
            <person name="Haft D.H."/>
            <person name="Vamathevan J.J."/>
            <person name="Khouri H."/>
            <person name="Utterback T.R."/>
            <person name="Lee C."/>
            <person name="Dimitrov G."/>
            <person name="Jiang L."/>
            <person name="Qin H."/>
            <person name="Weidman J."/>
            <person name="Tran K."/>
            <person name="Kang K.H."/>
            <person name="Hance I.R."/>
            <person name="Nelson K.E."/>
            <person name="Fraser C.M."/>
        </authorList>
    </citation>
    <scope>NUCLEOTIDE SEQUENCE [LARGE SCALE GENOMIC DNA]</scope>
    <source>
        <strain>COL</strain>
    </source>
</reference>
<feature type="chain" id="PRO_0000113008" description="Ornithine carbamoyltransferase">
    <location>
        <begin position="1"/>
        <end position="333"/>
    </location>
</feature>
<feature type="binding site" evidence="2">
    <location>
        <begin position="56"/>
        <end position="59"/>
    </location>
    <ligand>
        <name>carbamoyl phosphate</name>
        <dbReference type="ChEBI" id="CHEBI:58228"/>
    </ligand>
</feature>
<feature type="binding site" evidence="2">
    <location>
        <position position="83"/>
    </location>
    <ligand>
        <name>carbamoyl phosphate</name>
        <dbReference type="ChEBI" id="CHEBI:58228"/>
    </ligand>
</feature>
<feature type="binding site" evidence="2">
    <location>
        <position position="107"/>
    </location>
    <ligand>
        <name>carbamoyl phosphate</name>
        <dbReference type="ChEBI" id="CHEBI:58228"/>
    </ligand>
</feature>
<feature type="binding site" evidence="2">
    <location>
        <begin position="134"/>
        <end position="137"/>
    </location>
    <ligand>
        <name>carbamoyl phosphate</name>
        <dbReference type="ChEBI" id="CHEBI:58228"/>
    </ligand>
</feature>
<feature type="binding site" evidence="2">
    <location>
        <position position="167"/>
    </location>
    <ligand>
        <name>L-ornithine</name>
        <dbReference type="ChEBI" id="CHEBI:46911"/>
    </ligand>
</feature>
<feature type="binding site" evidence="2">
    <location>
        <position position="231"/>
    </location>
    <ligand>
        <name>L-ornithine</name>
        <dbReference type="ChEBI" id="CHEBI:46911"/>
    </ligand>
</feature>
<feature type="binding site" evidence="2">
    <location>
        <begin position="235"/>
        <end position="236"/>
    </location>
    <ligand>
        <name>L-ornithine</name>
        <dbReference type="ChEBI" id="CHEBI:46911"/>
    </ligand>
</feature>
<feature type="binding site" evidence="2">
    <location>
        <begin position="273"/>
        <end position="274"/>
    </location>
    <ligand>
        <name>carbamoyl phosphate</name>
        <dbReference type="ChEBI" id="CHEBI:58228"/>
    </ligand>
</feature>
<feature type="binding site" evidence="2">
    <location>
        <position position="318"/>
    </location>
    <ligand>
        <name>carbamoyl phosphate</name>
        <dbReference type="ChEBI" id="CHEBI:58228"/>
    </ligand>
</feature>
<accession>Q5HGR3</accession>
<keyword id="KW-0028">Amino-acid biosynthesis</keyword>
<keyword id="KW-0055">Arginine biosynthesis</keyword>
<keyword id="KW-0963">Cytoplasm</keyword>
<keyword id="KW-0808">Transferase</keyword>
<protein>
    <recommendedName>
        <fullName>Ornithine carbamoyltransferase</fullName>
        <shortName>OTCase</shortName>
        <ecNumber>2.1.3.3</ecNumber>
    </recommendedName>
</protein>
<organism>
    <name type="scientific">Staphylococcus aureus (strain COL)</name>
    <dbReference type="NCBI Taxonomy" id="93062"/>
    <lineage>
        <taxon>Bacteria</taxon>
        <taxon>Bacillati</taxon>
        <taxon>Bacillota</taxon>
        <taxon>Bacilli</taxon>
        <taxon>Bacillales</taxon>
        <taxon>Staphylococcaceae</taxon>
        <taxon>Staphylococcus</taxon>
    </lineage>
</organism>
<sequence length="333" mass="37517">MKNLRNRSFLTLLDFSRQEVEFLLTLSEDLKRAKYIGTEKPMLKNKNIALLFEKDSTRTRCAFEVAAHDQGANVTYLGPTGSQMGKKETTKDTARVLGGMYDGIEYRGFSQRTVETLAEYSGVPVWNGLTDEDHPTQVLADFLTAKEVLKKDYADINFTYVGDGRNNVANALMQGAAIMGMNFHLVCPKELNPTDELLNRCKNIAAENGGNILITDDIDQGVKGSDVIYTDVWVSMGEPDEVWKERLELLKPYQVNKEIMDKTGNPNVIFEHCLPSFHNADTKIGQQIFEKYGIREMEVTDEVFESKASVVFQEAENRMHTIKAVMVATLGEF</sequence>
<name>OTC_STAAC</name>
<gene>
    <name type="primary">argF</name>
    <name type="ordered locus">SACOL1181</name>
</gene>